<name>SUB2B_COCP7</name>
<protein>
    <recommendedName>
        <fullName>Subtilisin-like protease CPC735_003880</fullName>
        <ecNumber>3.4.21.-</ecNumber>
    </recommendedName>
</protein>
<organism>
    <name type="scientific">Coccidioides posadasii (strain C735)</name>
    <name type="common">Valley fever fungus</name>
    <dbReference type="NCBI Taxonomy" id="222929"/>
    <lineage>
        <taxon>Eukaryota</taxon>
        <taxon>Fungi</taxon>
        <taxon>Dikarya</taxon>
        <taxon>Ascomycota</taxon>
        <taxon>Pezizomycotina</taxon>
        <taxon>Eurotiomycetes</taxon>
        <taxon>Eurotiomycetidae</taxon>
        <taxon>Onygenales</taxon>
        <taxon>Onygenaceae</taxon>
        <taxon>Coccidioides</taxon>
    </lineage>
</organism>
<proteinExistence type="inferred from homology"/>
<feature type="signal peptide" evidence="2">
    <location>
        <begin position="1"/>
        <end position="17"/>
    </location>
</feature>
<feature type="propeptide" id="PRO_0000407008" evidence="1">
    <location>
        <begin position="18"/>
        <end position="118"/>
    </location>
</feature>
<feature type="chain" id="PRO_0000407009" description="Subtilisin-like protease CPC735_003880">
    <location>
        <begin position="119"/>
        <end position="410"/>
    </location>
</feature>
<feature type="domain" description="Inhibitor I9" evidence="2">
    <location>
        <begin position="31"/>
        <end position="118"/>
    </location>
</feature>
<feature type="domain" description="Peptidase S8" evidence="3">
    <location>
        <begin position="127"/>
        <end position="410"/>
    </location>
</feature>
<feature type="active site" description="Charge relay system" evidence="3">
    <location>
        <position position="159"/>
    </location>
</feature>
<feature type="active site" description="Charge relay system" evidence="3">
    <location>
        <position position="191"/>
    </location>
</feature>
<feature type="active site" description="Charge relay system" evidence="3">
    <location>
        <position position="347"/>
    </location>
</feature>
<feature type="glycosylation site" description="N-linked (GlcNAc...) asparagine" evidence="2">
    <location>
        <position position="182"/>
    </location>
</feature>
<feature type="glycosylation site" description="N-linked (GlcNAc...) asparagine" evidence="2">
    <location>
        <position position="238"/>
    </location>
</feature>
<feature type="glycosylation site" description="N-linked (GlcNAc...) asparagine" evidence="2">
    <location>
        <position position="251"/>
    </location>
</feature>
<feature type="glycosylation site" description="N-linked (GlcNAc...) asparagine" evidence="2">
    <location>
        <position position="338"/>
    </location>
</feature>
<feature type="glycosylation site" description="N-linked (GlcNAc...) asparagine" evidence="2">
    <location>
        <position position="405"/>
    </location>
</feature>
<reference key="1">
    <citation type="journal article" date="2009" name="Genome Res.">
        <title>Comparative genomic analyses of the human fungal pathogens Coccidioides and their relatives.</title>
        <authorList>
            <person name="Sharpton T.J."/>
            <person name="Stajich J.E."/>
            <person name="Rounsley S.D."/>
            <person name="Gardner M.J."/>
            <person name="Wortman J.R."/>
            <person name="Jordar V.S."/>
            <person name="Maiti R."/>
            <person name="Kodira C.D."/>
            <person name="Neafsey D.E."/>
            <person name="Zeng Q."/>
            <person name="Hung C.-Y."/>
            <person name="McMahan C."/>
            <person name="Muszewska A."/>
            <person name="Grynberg M."/>
            <person name="Mandel M.A."/>
            <person name="Kellner E.M."/>
            <person name="Barker B.M."/>
            <person name="Galgiani J.N."/>
            <person name="Orbach M.J."/>
            <person name="Kirkland T.N."/>
            <person name="Cole G.T."/>
            <person name="Henn M.R."/>
            <person name="Birren B.W."/>
            <person name="Taylor J.W."/>
        </authorList>
    </citation>
    <scope>NUCLEOTIDE SEQUENCE [LARGE SCALE GENOMIC DNA]</scope>
    <source>
        <strain>C735</strain>
    </source>
</reference>
<sequence length="410" mass="44435">MKLLKSSLLLLLPFVTANPIPSEDKDIIPGRYIVTLKDGITQEDIEYHKSWVASVHRSNLAAATAAGRPRLETEGIRKFFQIHKMNAYSGAFDDQTAEDIRRNPYVKSVTPDRKVYLADTVVQENAGYNLGHMSSKGRHSFTYRYDSTAGEGIWAYVLDTGINVDHIEFEGRADSGYNAIKNVSNTDNFGHGSFTAGIIAAKTYGVAKKATVISAKAFDTGSSTYDYIFDAYNWVVKNITDSGRQKKSVVNMSISSAKYQPFDDAVDNAFEAGITTVVAAGNDQRDASNNTPASAANAITVASIRFDNGRSLFSNYGSVVDIFAPGERIVSCWIGGNNATRKADGTSVSSPHVAGLVAYLMAIEDLPDPAAVTKRVLDLSIPDLVRDPGEGSPNRIAYNGIQEMNETVIA</sequence>
<accession>C5P906</accession>
<dbReference type="EC" id="3.4.21.-"/>
<dbReference type="EMBL" id="ACFW01000030">
    <property type="protein sequence ID" value="EER26218.1"/>
    <property type="molecule type" value="Genomic_DNA"/>
</dbReference>
<dbReference type="RefSeq" id="XP_003068363.1">
    <property type="nucleotide sequence ID" value="XM_003068317.1"/>
</dbReference>
<dbReference type="SMR" id="C5P906"/>
<dbReference type="KEGG" id="cpw:9694561"/>
<dbReference type="VEuPathDB" id="FungiDB:CPC735_003880"/>
<dbReference type="HOGENOM" id="CLU_011263_1_4_1"/>
<dbReference type="OrthoDB" id="206201at2759"/>
<dbReference type="Proteomes" id="UP000009084">
    <property type="component" value="Unassembled WGS sequence"/>
</dbReference>
<dbReference type="GO" id="GO:0005576">
    <property type="term" value="C:extracellular region"/>
    <property type="evidence" value="ECO:0007669"/>
    <property type="project" value="UniProtKB-SubCell"/>
</dbReference>
<dbReference type="GO" id="GO:0004252">
    <property type="term" value="F:serine-type endopeptidase activity"/>
    <property type="evidence" value="ECO:0007669"/>
    <property type="project" value="InterPro"/>
</dbReference>
<dbReference type="GO" id="GO:0006508">
    <property type="term" value="P:proteolysis"/>
    <property type="evidence" value="ECO:0007669"/>
    <property type="project" value="UniProtKB-KW"/>
</dbReference>
<dbReference type="CDD" id="cd04077">
    <property type="entry name" value="Peptidases_S8_PCSK9_ProteinaseK_like"/>
    <property type="match status" value="1"/>
</dbReference>
<dbReference type="FunFam" id="3.40.50.200:FF:000014">
    <property type="entry name" value="Proteinase K"/>
    <property type="match status" value="1"/>
</dbReference>
<dbReference type="Gene3D" id="3.30.70.80">
    <property type="entry name" value="Peptidase S8 propeptide/proteinase inhibitor I9"/>
    <property type="match status" value="1"/>
</dbReference>
<dbReference type="Gene3D" id="3.40.50.200">
    <property type="entry name" value="Peptidase S8/S53 domain"/>
    <property type="match status" value="1"/>
</dbReference>
<dbReference type="InterPro" id="IPR034193">
    <property type="entry name" value="PCSK9_ProteinaseK-like"/>
</dbReference>
<dbReference type="InterPro" id="IPR000209">
    <property type="entry name" value="Peptidase_S8/S53_dom"/>
</dbReference>
<dbReference type="InterPro" id="IPR036852">
    <property type="entry name" value="Peptidase_S8/S53_dom_sf"/>
</dbReference>
<dbReference type="InterPro" id="IPR023827">
    <property type="entry name" value="Peptidase_S8_Asp-AS"/>
</dbReference>
<dbReference type="InterPro" id="IPR023828">
    <property type="entry name" value="Peptidase_S8_Ser-AS"/>
</dbReference>
<dbReference type="InterPro" id="IPR050131">
    <property type="entry name" value="Peptidase_S8_subtilisin-like"/>
</dbReference>
<dbReference type="InterPro" id="IPR015500">
    <property type="entry name" value="Peptidase_S8_subtilisin-rel"/>
</dbReference>
<dbReference type="InterPro" id="IPR010259">
    <property type="entry name" value="S8pro/Inhibitor_I9"/>
</dbReference>
<dbReference type="InterPro" id="IPR037045">
    <property type="entry name" value="S8pro/Inhibitor_I9_sf"/>
</dbReference>
<dbReference type="PANTHER" id="PTHR43806:SF58">
    <property type="entry name" value="ALKALINE PROTEASE 1-RELATED"/>
    <property type="match status" value="1"/>
</dbReference>
<dbReference type="PANTHER" id="PTHR43806">
    <property type="entry name" value="PEPTIDASE S8"/>
    <property type="match status" value="1"/>
</dbReference>
<dbReference type="Pfam" id="PF05922">
    <property type="entry name" value="Inhibitor_I9"/>
    <property type="match status" value="1"/>
</dbReference>
<dbReference type="Pfam" id="PF00082">
    <property type="entry name" value="Peptidase_S8"/>
    <property type="match status" value="1"/>
</dbReference>
<dbReference type="PRINTS" id="PR00723">
    <property type="entry name" value="SUBTILISIN"/>
</dbReference>
<dbReference type="SUPFAM" id="SSF52743">
    <property type="entry name" value="Subtilisin-like"/>
    <property type="match status" value="1"/>
</dbReference>
<dbReference type="PROSITE" id="PS51892">
    <property type="entry name" value="SUBTILASE"/>
    <property type="match status" value="1"/>
</dbReference>
<dbReference type="PROSITE" id="PS00136">
    <property type="entry name" value="SUBTILASE_ASP"/>
    <property type="match status" value="1"/>
</dbReference>
<dbReference type="PROSITE" id="PS00138">
    <property type="entry name" value="SUBTILASE_SER"/>
    <property type="match status" value="1"/>
</dbReference>
<gene>
    <name type="ORF">CPC735_003880</name>
</gene>
<evidence type="ECO:0000250" key="1"/>
<evidence type="ECO:0000255" key="2"/>
<evidence type="ECO:0000255" key="3">
    <source>
        <dbReference type="PROSITE-ProRule" id="PRU01240"/>
    </source>
</evidence>
<evidence type="ECO:0000305" key="4"/>
<comment type="function">
    <text evidence="1">Secreted subtilisin-like serine protease with keratinolytic activity that contributes to pathogenicity.</text>
</comment>
<comment type="subcellular location">
    <subcellularLocation>
        <location evidence="1">Secreted</location>
    </subcellularLocation>
</comment>
<comment type="similarity">
    <text evidence="4">Belongs to the peptidase S8 family.</text>
</comment>
<keyword id="KW-0325">Glycoprotein</keyword>
<keyword id="KW-0378">Hydrolase</keyword>
<keyword id="KW-0645">Protease</keyword>
<keyword id="KW-0964">Secreted</keyword>
<keyword id="KW-0720">Serine protease</keyword>
<keyword id="KW-0732">Signal</keyword>
<keyword id="KW-0843">Virulence</keyword>
<keyword id="KW-0865">Zymogen</keyword>